<gene>
    <name type="ordered locus">ssl0452</name>
</gene>
<dbReference type="EMBL" id="BA000022">
    <property type="protein sequence ID" value="BAA17955.1"/>
    <property type="molecule type" value="Genomic_DNA"/>
</dbReference>
<dbReference type="PIR" id="S75093">
    <property type="entry name" value="S75093"/>
</dbReference>
<dbReference type="SMR" id="P73891"/>
<dbReference type="IntAct" id="P73891">
    <property type="interactions" value="5"/>
</dbReference>
<dbReference type="STRING" id="1148.gene:10498824"/>
<dbReference type="PaxDb" id="1148-1653038"/>
<dbReference type="EnsemblBacteria" id="BAA17955">
    <property type="protein sequence ID" value="BAA17955"/>
    <property type="gene ID" value="BAA17955"/>
</dbReference>
<dbReference type="KEGG" id="syn:ssl0452"/>
<dbReference type="eggNOG" id="ENOG5030QDD">
    <property type="taxonomic scope" value="Bacteria"/>
</dbReference>
<dbReference type="InParanoid" id="P73891"/>
<dbReference type="Proteomes" id="UP000001425">
    <property type="component" value="Chromosome"/>
</dbReference>
<dbReference type="Gene3D" id="1.10.287.670">
    <property type="entry name" value="Phycobilisome degradation protein NblA"/>
    <property type="match status" value="1"/>
</dbReference>
<dbReference type="InterPro" id="IPR007574">
    <property type="entry name" value="NblA"/>
</dbReference>
<dbReference type="InterPro" id="IPR036904">
    <property type="entry name" value="NblA_sf"/>
</dbReference>
<dbReference type="Pfam" id="PF04485">
    <property type="entry name" value="NblA"/>
    <property type="match status" value="1"/>
</dbReference>
<dbReference type="SUPFAM" id="SSF109859">
    <property type="entry name" value="NblA-like"/>
    <property type="match status" value="1"/>
</dbReference>
<organism>
    <name type="scientific">Synechocystis sp. (strain ATCC 27184 / PCC 6803 / Kazusa)</name>
    <dbReference type="NCBI Taxonomy" id="1111708"/>
    <lineage>
        <taxon>Bacteria</taxon>
        <taxon>Bacillati</taxon>
        <taxon>Cyanobacteriota</taxon>
        <taxon>Cyanophyceae</taxon>
        <taxon>Synechococcales</taxon>
        <taxon>Merismopediaceae</taxon>
        <taxon>Synechocystis</taxon>
    </lineage>
</organism>
<sequence length="62" mass="7193">MKPESFDLTIEQMFEFRRMQDATANISQEQALELLVQASRLLMIKSNVIRDLMRQAPLEPLG</sequence>
<proteinExistence type="predicted"/>
<keyword id="KW-1185">Reference proteome</keyword>
<protein>
    <recommendedName>
        <fullName>Phycobilisome degradation protein NblA homolog 1</fullName>
    </recommendedName>
</protein>
<accession>P73891</accession>
<feature type="chain" id="PRO_0000096742" description="Phycobilisome degradation protein NblA homolog 1">
    <location>
        <begin position="1"/>
        <end position="62"/>
    </location>
</feature>
<evidence type="ECO:0000305" key="1"/>
<reference key="1">
    <citation type="journal article" date="1996" name="DNA Res.">
        <title>Sequence analysis of the genome of the unicellular cyanobacterium Synechocystis sp. strain PCC6803. II. Sequence determination of the entire genome and assignment of potential protein-coding regions.</title>
        <authorList>
            <person name="Kaneko T."/>
            <person name="Sato S."/>
            <person name="Kotani H."/>
            <person name="Tanaka A."/>
            <person name="Asamizu E."/>
            <person name="Nakamura Y."/>
            <person name="Miyajima N."/>
            <person name="Hirosawa M."/>
            <person name="Sugiura M."/>
            <person name="Sasamoto S."/>
            <person name="Kimura T."/>
            <person name="Hosouchi T."/>
            <person name="Matsuno A."/>
            <person name="Muraki A."/>
            <person name="Nakazaki N."/>
            <person name="Naruo K."/>
            <person name="Okumura S."/>
            <person name="Shimpo S."/>
            <person name="Takeuchi C."/>
            <person name="Wada T."/>
            <person name="Watanabe A."/>
            <person name="Yamada M."/>
            <person name="Yasuda M."/>
            <person name="Tabata S."/>
        </authorList>
    </citation>
    <scope>NUCLEOTIDE SEQUENCE [LARGE SCALE GENOMIC DNA]</scope>
    <source>
        <strain>ATCC 27184 / PCC 6803 / Kazusa</strain>
    </source>
</reference>
<comment type="similarity">
    <text evidence="1">To Synechococcus PCC 7942 NblA and some, to chloroplast ycf18.</text>
</comment>
<name>NBLA1_SYNY3</name>